<keyword id="KW-0010">Activator</keyword>
<keyword id="KW-0238">DNA-binding</keyword>
<keyword id="KW-1185">Reference proteome</keyword>
<keyword id="KW-0804">Transcription</keyword>
<keyword id="KW-0805">Transcription regulation</keyword>
<dbReference type="EMBL" id="AE005674">
    <property type="protein sequence ID" value="AAN43126.1"/>
    <property type="molecule type" value="Genomic_DNA"/>
</dbReference>
<dbReference type="EMBL" id="AE014073">
    <property type="protein sequence ID" value="AAP17017.1"/>
    <property type="molecule type" value="Genomic_DNA"/>
</dbReference>
<dbReference type="RefSeq" id="NP_707419.1">
    <property type="nucleotide sequence ID" value="NC_004337.2"/>
</dbReference>
<dbReference type="RefSeq" id="WP_000060475.1">
    <property type="nucleotide sequence ID" value="NZ_WPGV01000167.1"/>
</dbReference>
<dbReference type="SMR" id="Q83RF4"/>
<dbReference type="STRING" id="198214.SF1537"/>
<dbReference type="PaxDb" id="198214-SF1537"/>
<dbReference type="DNASU" id="1077977"/>
<dbReference type="GeneID" id="1024745"/>
<dbReference type="KEGG" id="sfl:SF1537"/>
<dbReference type="KEGG" id="sfx:S1654"/>
<dbReference type="PATRIC" id="fig|198214.7.peg.1814"/>
<dbReference type="HOGENOM" id="CLU_000445_81_4_6"/>
<dbReference type="Proteomes" id="UP000001006">
    <property type="component" value="Chromosome"/>
</dbReference>
<dbReference type="Proteomes" id="UP000002673">
    <property type="component" value="Chromosome"/>
</dbReference>
<dbReference type="GO" id="GO:0003700">
    <property type="term" value="F:DNA-binding transcription factor activity"/>
    <property type="evidence" value="ECO:0007669"/>
    <property type="project" value="InterPro"/>
</dbReference>
<dbReference type="GO" id="GO:0043565">
    <property type="term" value="F:sequence-specific DNA binding"/>
    <property type="evidence" value="ECO:0007669"/>
    <property type="project" value="InterPro"/>
</dbReference>
<dbReference type="FunFam" id="1.10.10.60:FF:000346">
    <property type="entry name" value="HTH-type transcriptional regulator ydeO"/>
    <property type="match status" value="1"/>
</dbReference>
<dbReference type="Gene3D" id="1.10.10.60">
    <property type="entry name" value="Homeodomain-like"/>
    <property type="match status" value="1"/>
</dbReference>
<dbReference type="InterPro" id="IPR009057">
    <property type="entry name" value="Homeodomain-like_sf"/>
</dbReference>
<dbReference type="InterPro" id="IPR018060">
    <property type="entry name" value="HTH_AraC"/>
</dbReference>
<dbReference type="InterPro" id="IPR018062">
    <property type="entry name" value="HTH_AraC-typ_CS"/>
</dbReference>
<dbReference type="InterPro" id="IPR020449">
    <property type="entry name" value="Tscrpt_reg_AraC-type_HTH"/>
</dbReference>
<dbReference type="NCBIfam" id="NF007407">
    <property type="entry name" value="PRK09940.1"/>
    <property type="match status" value="1"/>
</dbReference>
<dbReference type="PANTHER" id="PTHR43280">
    <property type="entry name" value="ARAC-FAMILY TRANSCRIPTIONAL REGULATOR"/>
    <property type="match status" value="1"/>
</dbReference>
<dbReference type="PANTHER" id="PTHR43280:SF33">
    <property type="entry name" value="HTH-TYPE TRANSCRIPTIONAL REGULATOR APPY-RELATED"/>
    <property type="match status" value="1"/>
</dbReference>
<dbReference type="Pfam" id="PF12833">
    <property type="entry name" value="HTH_18"/>
    <property type="match status" value="1"/>
</dbReference>
<dbReference type="PRINTS" id="PR00032">
    <property type="entry name" value="HTHARAC"/>
</dbReference>
<dbReference type="SMART" id="SM00342">
    <property type="entry name" value="HTH_ARAC"/>
    <property type="match status" value="1"/>
</dbReference>
<dbReference type="SUPFAM" id="SSF46689">
    <property type="entry name" value="Homeodomain-like"/>
    <property type="match status" value="1"/>
</dbReference>
<dbReference type="PROSITE" id="PS00041">
    <property type="entry name" value="HTH_ARAC_FAMILY_1"/>
    <property type="match status" value="1"/>
</dbReference>
<dbReference type="PROSITE" id="PS01124">
    <property type="entry name" value="HTH_ARAC_FAMILY_2"/>
    <property type="match status" value="1"/>
</dbReference>
<accession>Q83RF4</accession>
<accession>Q7C1L6</accession>
<evidence type="ECO:0000250" key="1"/>
<evidence type="ECO:0000255" key="2">
    <source>
        <dbReference type="PROSITE-ProRule" id="PRU00593"/>
    </source>
</evidence>
<reference key="1">
    <citation type="journal article" date="2002" name="Nucleic Acids Res.">
        <title>Genome sequence of Shigella flexneri 2a: insights into pathogenicity through comparison with genomes of Escherichia coli K12 and O157.</title>
        <authorList>
            <person name="Jin Q."/>
            <person name="Yuan Z."/>
            <person name="Xu J."/>
            <person name="Wang Y."/>
            <person name="Shen Y."/>
            <person name="Lu W."/>
            <person name="Wang J."/>
            <person name="Liu H."/>
            <person name="Yang J."/>
            <person name="Yang F."/>
            <person name="Zhang X."/>
            <person name="Zhang J."/>
            <person name="Yang G."/>
            <person name="Wu H."/>
            <person name="Qu D."/>
            <person name="Dong J."/>
            <person name="Sun L."/>
            <person name="Xue Y."/>
            <person name="Zhao A."/>
            <person name="Gao Y."/>
            <person name="Zhu J."/>
            <person name="Kan B."/>
            <person name="Ding K."/>
            <person name="Chen S."/>
            <person name="Cheng H."/>
            <person name="Yao Z."/>
            <person name="He B."/>
            <person name="Chen R."/>
            <person name="Ma D."/>
            <person name="Qiang B."/>
            <person name="Wen Y."/>
            <person name="Hou Y."/>
            <person name="Yu J."/>
        </authorList>
    </citation>
    <scope>NUCLEOTIDE SEQUENCE [LARGE SCALE GENOMIC DNA]</scope>
    <source>
        <strain>301 / Serotype 2a</strain>
    </source>
</reference>
<reference key="2">
    <citation type="journal article" date="2003" name="Infect. Immun.">
        <title>Complete genome sequence and comparative genomics of Shigella flexneri serotype 2a strain 2457T.</title>
        <authorList>
            <person name="Wei J."/>
            <person name="Goldberg M.B."/>
            <person name="Burland V."/>
            <person name="Venkatesan M.M."/>
            <person name="Deng W."/>
            <person name="Fournier G."/>
            <person name="Mayhew G.F."/>
            <person name="Plunkett G. III"/>
            <person name="Rose D.J."/>
            <person name="Darling A."/>
            <person name="Mau B."/>
            <person name="Perna N.T."/>
            <person name="Payne S.M."/>
            <person name="Runyen-Janecky L.J."/>
            <person name="Zhou S."/>
            <person name="Schwartz D.C."/>
            <person name="Blattner F.R."/>
        </authorList>
    </citation>
    <scope>NUCLEOTIDE SEQUENCE [LARGE SCALE GENOMIC DNA]</scope>
    <source>
        <strain>ATCC 700930 / 2457T / Serotype 2a</strain>
    </source>
</reference>
<feature type="chain" id="PRO_0000194609" description="HTH-type transcriptional regulator YdeO">
    <location>
        <begin position="1"/>
        <end position="253"/>
    </location>
</feature>
<feature type="domain" description="HTH araC/xylS-type" evidence="2">
    <location>
        <begin position="137"/>
        <end position="233"/>
    </location>
</feature>
<feature type="DNA-binding region" description="H-T-H motif" evidence="2">
    <location>
        <begin position="154"/>
        <end position="175"/>
    </location>
</feature>
<feature type="DNA-binding region" description="H-T-H motif" evidence="2">
    <location>
        <begin position="200"/>
        <end position="223"/>
    </location>
</feature>
<sequence length="253" mass="28796">MSLVCSVIFIHHAFNANILDKDYAFSDGEILMVDNAVRTHFEPYERHFKEIGFNENTIKKYLQCTNIQTVTVPVPAKFLRASNVPTGLLNEMIAYLNSEERNHHNFSELLLFSCLSIFAACKGFITLLTNGVLSVSGKVRNIVNMKLAHPWKLKDICDCLYISESLLKKKLKQEQTTFSQILLDARMQHAKNLIRVEGSVNKIAEQCGYASTSYFIYAFRKHFGNSPKRVSKEYRCQRHTGMNTGNTMSALAI</sequence>
<organism>
    <name type="scientific">Shigella flexneri</name>
    <dbReference type="NCBI Taxonomy" id="623"/>
    <lineage>
        <taxon>Bacteria</taxon>
        <taxon>Pseudomonadati</taxon>
        <taxon>Pseudomonadota</taxon>
        <taxon>Gammaproteobacteria</taxon>
        <taxon>Enterobacterales</taxon>
        <taxon>Enterobacteriaceae</taxon>
        <taxon>Shigella</taxon>
    </lineage>
</organism>
<gene>
    <name type="primary">ydeO</name>
    <name type="ordered locus">SF1537</name>
    <name type="ordered locus">S1654</name>
</gene>
<name>YDEO_SHIFL</name>
<protein>
    <recommendedName>
        <fullName>HTH-type transcriptional regulator YdeO</fullName>
    </recommendedName>
</protein>
<comment type="function">
    <text evidence="1">Induces the expression of gadE. Could also regulate the expression of other genes involved in acid resistance (By similarity).</text>
</comment>
<comment type="induction">
    <text evidence="1">Induced by EvgA.</text>
</comment>
<proteinExistence type="inferred from homology"/>